<accession>Q1GP42</accession>
<keyword id="KW-0012">Acyltransferase</keyword>
<keyword id="KW-0963">Cytoplasm</keyword>
<keyword id="KW-0408">Iron</keyword>
<keyword id="KW-0479">Metal-binding</keyword>
<keyword id="KW-1185">Reference proteome</keyword>
<keyword id="KW-0808">Transferase</keyword>
<keyword id="KW-0819">tRNA processing</keyword>
<feature type="chain" id="PRO_0000303543" description="tRNA N6-adenosine threonylcarbamoyltransferase">
    <location>
        <begin position="1"/>
        <end position="344"/>
    </location>
</feature>
<feature type="binding site" evidence="1">
    <location>
        <position position="112"/>
    </location>
    <ligand>
        <name>Fe cation</name>
        <dbReference type="ChEBI" id="CHEBI:24875"/>
    </ligand>
</feature>
<feature type="binding site" evidence="1">
    <location>
        <position position="116"/>
    </location>
    <ligand>
        <name>Fe cation</name>
        <dbReference type="ChEBI" id="CHEBI:24875"/>
    </ligand>
</feature>
<feature type="binding site" evidence="1">
    <location>
        <begin position="135"/>
        <end position="139"/>
    </location>
    <ligand>
        <name>substrate</name>
    </ligand>
</feature>
<feature type="binding site" evidence="1">
    <location>
        <position position="168"/>
    </location>
    <ligand>
        <name>substrate</name>
    </ligand>
</feature>
<feature type="binding site" evidence="1">
    <location>
        <position position="181"/>
    </location>
    <ligand>
        <name>substrate</name>
    </ligand>
</feature>
<feature type="binding site" evidence="1">
    <location>
        <position position="271"/>
    </location>
    <ligand>
        <name>substrate</name>
    </ligand>
</feature>
<feature type="binding site" evidence="1">
    <location>
        <position position="299"/>
    </location>
    <ligand>
        <name>Fe cation</name>
        <dbReference type="ChEBI" id="CHEBI:24875"/>
    </ligand>
</feature>
<sequence length="344" mass="35076">MTLILGLESSCDETAAALVTGDRRVLAHRVAGQEAEHRPYGGVVPEIAARAHVDRLAPIVEGVLDDAGVTLADVDAIAATAGPGLIGGVMVGLVTGKALAHAANKPLIAVNHLEGHALSPRLADPTLDFPYLLLLVSGGHCQLLLVKGVGDYRRLATTIDDAAGEAFDKTAKLLGLGYPGGPAVERIAAEGDPHAVPLPRPLVGSAEPHFSFAGLKSAVARAAASGTHDVADLAASFQQAVVDCLVDRSRGALAACPDARAFVVAGGVAANGAIRTALTDLAARFDKPFVAPPLWLCTDNGAMIAWAGAERFAAGLTDPLDTAARPRWPLDPAAEAVRGAGVKA</sequence>
<reference key="1">
    <citation type="journal article" date="2009" name="Proc. Natl. Acad. Sci. U.S.A.">
        <title>The genomic basis of trophic strategy in marine bacteria.</title>
        <authorList>
            <person name="Lauro F.M."/>
            <person name="McDougald D."/>
            <person name="Thomas T."/>
            <person name="Williams T.J."/>
            <person name="Egan S."/>
            <person name="Rice S."/>
            <person name="DeMaere M.Z."/>
            <person name="Ting L."/>
            <person name="Ertan H."/>
            <person name="Johnson J."/>
            <person name="Ferriera S."/>
            <person name="Lapidus A."/>
            <person name="Anderson I."/>
            <person name="Kyrpides N."/>
            <person name="Munk A.C."/>
            <person name="Detter C."/>
            <person name="Han C.S."/>
            <person name="Brown M.V."/>
            <person name="Robb F.T."/>
            <person name="Kjelleberg S."/>
            <person name="Cavicchioli R."/>
        </authorList>
    </citation>
    <scope>NUCLEOTIDE SEQUENCE [LARGE SCALE GENOMIC DNA]</scope>
    <source>
        <strain>DSM 13593 / LMG 18877 / RB2256</strain>
    </source>
</reference>
<name>TSAD_SPHAL</name>
<comment type="function">
    <text evidence="1">Required for the formation of a threonylcarbamoyl group on adenosine at position 37 (t(6)A37) in tRNAs that read codons beginning with adenine. Is involved in the transfer of the threonylcarbamoyl moiety of threonylcarbamoyl-AMP (TC-AMP) to the N6 group of A37, together with TsaE and TsaB. TsaD likely plays a direct catalytic role in this reaction.</text>
</comment>
<comment type="catalytic activity">
    <reaction evidence="1">
        <text>L-threonylcarbamoyladenylate + adenosine(37) in tRNA = N(6)-L-threonylcarbamoyladenosine(37) in tRNA + AMP + H(+)</text>
        <dbReference type="Rhea" id="RHEA:37059"/>
        <dbReference type="Rhea" id="RHEA-COMP:10162"/>
        <dbReference type="Rhea" id="RHEA-COMP:10163"/>
        <dbReference type="ChEBI" id="CHEBI:15378"/>
        <dbReference type="ChEBI" id="CHEBI:73682"/>
        <dbReference type="ChEBI" id="CHEBI:74411"/>
        <dbReference type="ChEBI" id="CHEBI:74418"/>
        <dbReference type="ChEBI" id="CHEBI:456215"/>
        <dbReference type="EC" id="2.3.1.234"/>
    </reaction>
</comment>
<comment type="cofactor">
    <cofactor evidence="1">
        <name>Fe(2+)</name>
        <dbReference type="ChEBI" id="CHEBI:29033"/>
    </cofactor>
    <text evidence="1">Binds 1 Fe(2+) ion per subunit.</text>
</comment>
<comment type="subcellular location">
    <subcellularLocation>
        <location evidence="1">Cytoplasm</location>
    </subcellularLocation>
</comment>
<comment type="similarity">
    <text evidence="1">Belongs to the KAE1 / TsaD family.</text>
</comment>
<evidence type="ECO:0000255" key="1">
    <source>
        <dbReference type="HAMAP-Rule" id="MF_01445"/>
    </source>
</evidence>
<proteinExistence type="inferred from homology"/>
<protein>
    <recommendedName>
        <fullName evidence="1">tRNA N6-adenosine threonylcarbamoyltransferase</fullName>
        <ecNumber evidence="1">2.3.1.234</ecNumber>
    </recommendedName>
    <alternativeName>
        <fullName evidence="1">N6-L-threonylcarbamoyladenine synthase</fullName>
        <shortName evidence="1">t(6)A synthase</shortName>
    </alternativeName>
    <alternativeName>
        <fullName evidence="1">t(6)A37 threonylcarbamoyladenosine biosynthesis protein TsaD</fullName>
    </alternativeName>
    <alternativeName>
        <fullName evidence="1">tRNA threonylcarbamoyladenosine biosynthesis protein TsaD</fullName>
    </alternativeName>
</protein>
<organism>
    <name type="scientific">Sphingopyxis alaskensis (strain DSM 13593 / LMG 18877 / RB2256)</name>
    <name type="common">Sphingomonas alaskensis</name>
    <dbReference type="NCBI Taxonomy" id="317655"/>
    <lineage>
        <taxon>Bacteria</taxon>
        <taxon>Pseudomonadati</taxon>
        <taxon>Pseudomonadota</taxon>
        <taxon>Alphaproteobacteria</taxon>
        <taxon>Sphingomonadales</taxon>
        <taxon>Sphingomonadaceae</taxon>
        <taxon>Sphingopyxis</taxon>
    </lineage>
</organism>
<gene>
    <name evidence="1" type="primary">tsaD</name>
    <name type="synonym">gcp</name>
    <name type="ordered locus">Sala_2875</name>
</gene>
<dbReference type="EC" id="2.3.1.234" evidence="1"/>
<dbReference type="EMBL" id="CP000356">
    <property type="protein sequence ID" value="ABF54580.1"/>
    <property type="molecule type" value="Genomic_DNA"/>
</dbReference>
<dbReference type="RefSeq" id="WP_011543144.1">
    <property type="nucleotide sequence ID" value="NC_008048.1"/>
</dbReference>
<dbReference type="SMR" id="Q1GP42"/>
<dbReference type="STRING" id="317655.Sala_2875"/>
<dbReference type="KEGG" id="sal:Sala_2875"/>
<dbReference type="eggNOG" id="COG0533">
    <property type="taxonomic scope" value="Bacteria"/>
</dbReference>
<dbReference type="HOGENOM" id="CLU_023208_0_2_5"/>
<dbReference type="OrthoDB" id="9806197at2"/>
<dbReference type="Proteomes" id="UP000006578">
    <property type="component" value="Chromosome"/>
</dbReference>
<dbReference type="GO" id="GO:0005737">
    <property type="term" value="C:cytoplasm"/>
    <property type="evidence" value="ECO:0007669"/>
    <property type="project" value="UniProtKB-SubCell"/>
</dbReference>
<dbReference type="GO" id="GO:0005506">
    <property type="term" value="F:iron ion binding"/>
    <property type="evidence" value="ECO:0007669"/>
    <property type="project" value="UniProtKB-UniRule"/>
</dbReference>
<dbReference type="GO" id="GO:0061711">
    <property type="term" value="F:N(6)-L-threonylcarbamoyladenine synthase activity"/>
    <property type="evidence" value="ECO:0007669"/>
    <property type="project" value="UniProtKB-EC"/>
</dbReference>
<dbReference type="GO" id="GO:0002949">
    <property type="term" value="P:tRNA threonylcarbamoyladenosine modification"/>
    <property type="evidence" value="ECO:0007669"/>
    <property type="project" value="UniProtKB-UniRule"/>
</dbReference>
<dbReference type="CDD" id="cd24133">
    <property type="entry name" value="ASKHA_NBD_TsaD_bac"/>
    <property type="match status" value="1"/>
</dbReference>
<dbReference type="FunFam" id="3.30.420.40:FF:000012">
    <property type="entry name" value="tRNA N6-adenosine threonylcarbamoyltransferase"/>
    <property type="match status" value="1"/>
</dbReference>
<dbReference type="Gene3D" id="3.30.420.40">
    <property type="match status" value="2"/>
</dbReference>
<dbReference type="HAMAP" id="MF_01445">
    <property type="entry name" value="TsaD"/>
    <property type="match status" value="1"/>
</dbReference>
<dbReference type="InterPro" id="IPR043129">
    <property type="entry name" value="ATPase_NBD"/>
</dbReference>
<dbReference type="InterPro" id="IPR000905">
    <property type="entry name" value="Gcp-like_dom"/>
</dbReference>
<dbReference type="InterPro" id="IPR017861">
    <property type="entry name" value="KAE1/TsaD"/>
</dbReference>
<dbReference type="InterPro" id="IPR022450">
    <property type="entry name" value="TsaD"/>
</dbReference>
<dbReference type="NCBIfam" id="TIGR00329">
    <property type="entry name" value="gcp_kae1"/>
    <property type="match status" value="1"/>
</dbReference>
<dbReference type="NCBIfam" id="TIGR03723">
    <property type="entry name" value="T6A_TsaD_YgjD"/>
    <property type="match status" value="1"/>
</dbReference>
<dbReference type="PANTHER" id="PTHR11735">
    <property type="entry name" value="TRNA N6-ADENOSINE THREONYLCARBAMOYLTRANSFERASE"/>
    <property type="match status" value="1"/>
</dbReference>
<dbReference type="PANTHER" id="PTHR11735:SF6">
    <property type="entry name" value="TRNA N6-ADENOSINE THREONYLCARBAMOYLTRANSFERASE, MITOCHONDRIAL"/>
    <property type="match status" value="1"/>
</dbReference>
<dbReference type="Pfam" id="PF00814">
    <property type="entry name" value="TsaD"/>
    <property type="match status" value="1"/>
</dbReference>
<dbReference type="PRINTS" id="PR00789">
    <property type="entry name" value="OSIALOPTASE"/>
</dbReference>
<dbReference type="SUPFAM" id="SSF53067">
    <property type="entry name" value="Actin-like ATPase domain"/>
    <property type="match status" value="2"/>
</dbReference>